<keyword id="KW-0002">3D-structure</keyword>
<keyword id="KW-0963">Cytoplasm</keyword>
<keyword id="KW-0903">Direct protein sequencing</keyword>
<keyword id="KW-0274">FAD</keyword>
<keyword id="KW-0285">Flavoprotein</keyword>
<keyword id="KW-0560">Oxidoreductase</keyword>
<accession>P23342</accession>
<gene>
    <name type="primary">soxA</name>
</gene>
<organism>
    <name type="scientific">Bacillus sp. (strain NS-129)</name>
    <dbReference type="NCBI Taxonomy" id="1419"/>
    <lineage>
        <taxon>Bacteria</taxon>
        <taxon>Bacillati</taxon>
        <taxon>Bacillota</taxon>
        <taxon>Bacilli</taxon>
        <taxon>Bacillales</taxon>
        <taxon>Bacillaceae</taxon>
        <taxon>Bacillus</taxon>
    </lineage>
</organism>
<comment type="function">
    <text evidence="1">Catalyzes the oxidative demethylation of sarcosine.</text>
</comment>
<comment type="catalytic activity">
    <reaction>
        <text>sarcosine + O2 + H2O = formaldehyde + glycine + H2O2</text>
        <dbReference type="Rhea" id="RHEA:13313"/>
        <dbReference type="ChEBI" id="CHEBI:15377"/>
        <dbReference type="ChEBI" id="CHEBI:15379"/>
        <dbReference type="ChEBI" id="CHEBI:16240"/>
        <dbReference type="ChEBI" id="CHEBI:16842"/>
        <dbReference type="ChEBI" id="CHEBI:57305"/>
        <dbReference type="ChEBI" id="CHEBI:57433"/>
        <dbReference type="EC" id="1.5.3.1"/>
    </reaction>
</comment>
<comment type="cofactor">
    <cofactor>
        <name>FAD</name>
        <dbReference type="ChEBI" id="CHEBI:57692"/>
    </cofactor>
    <text>Binds 1 FAD per subunit.</text>
</comment>
<comment type="subunit">
    <text evidence="3">Monomer.</text>
</comment>
<comment type="subcellular location">
    <subcellularLocation>
        <location>Cytoplasm</location>
    </subcellularLocation>
</comment>
<comment type="induction">
    <text>By sarcosine.</text>
</comment>
<comment type="similarity">
    <text evidence="4">Belongs to the MSOX/MTOX family. MSOX subfamily.</text>
</comment>
<proteinExistence type="evidence at protein level"/>
<reference key="1">
    <citation type="journal article" date="1991" name="Agric. Biol. Chem.">
        <title>Cloning and expression of the sarcosine oxidase gene from Bacillus sp. NS-129 in Escherichia coli.</title>
        <authorList>
            <person name="Koyama Y."/>
            <person name="Yamamoto-Otake H."/>
            <person name="Suzuki M."/>
            <person name="Nakano E."/>
        </authorList>
    </citation>
    <scope>NUCLEOTIDE SEQUENCE [GENOMIC DNA]</scope>
    <scope>PROTEIN SEQUENCE OF 1-34</scope>
</reference>
<reference key="2">
    <citation type="journal article" date="2005" name="Proc. Jpn. Acad.">
        <title>Crystal structure of monomeric sarcosine oxidase from Bacillus sp. NS-129 reveals multiple conformations at the active-site loop.</title>
        <authorList>
            <person name="Nagata K."/>
            <person name="Sasaki H."/>
            <person name="Ohtsuka J."/>
            <person name="Hua M."/>
            <person name="Okai M."/>
            <person name="Kubota K."/>
            <person name="Kamo M."/>
            <person name="Ito K."/>
            <person name="Ichikawa T."/>
            <person name="Koyama Y."/>
            <person name="Tanokura M."/>
        </authorList>
    </citation>
    <scope>X-RAY CRYSTALLOGRAPHY (1.86 ANGSTROMS) OF 2-387 IN COMPLEX WITH FAD</scope>
</reference>
<protein>
    <recommendedName>
        <fullName>Monomeric sarcosine oxidase</fullName>
        <shortName>MSOX</shortName>
        <ecNumber>1.5.3.1</ecNumber>
    </recommendedName>
</protein>
<evidence type="ECO:0000250" key="1"/>
<evidence type="ECO:0000255" key="2"/>
<evidence type="ECO:0000269" key="3">
    <source ref="2"/>
</evidence>
<evidence type="ECO:0000305" key="4"/>
<evidence type="ECO:0007829" key="5">
    <source>
        <dbReference type="PDB" id="1ZOV"/>
    </source>
</evidence>
<dbReference type="EC" id="1.5.3.1"/>
<dbReference type="EMBL" id="D10553">
    <property type="protein sequence ID" value="BAA01410.1"/>
    <property type="molecule type" value="Genomic_DNA"/>
</dbReference>
<dbReference type="PIR" id="JU0461">
    <property type="entry name" value="JU0461"/>
</dbReference>
<dbReference type="PDB" id="1ZOV">
    <property type="method" value="X-ray"/>
    <property type="resolution" value="1.86 A"/>
    <property type="chains" value="A/B=2-387"/>
</dbReference>
<dbReference type="PDBsum" id="1ZOV"/>
<dbReference type="SMR" id="P23342"/>
<dbReference type="EvolutionaryTrace" id="P23342"/>
<dbReference type="GO" id="GO:0005737">
    <property type="term" value="C:cytoplasm"/>
    <property type="evidence" value="ECO:0007669"/>
    <property type="project" value="UniProtKB-SubCell"/>
</dbReference>
<dbReference type="GO" id="GO:0050660">
    <property type="term" value="F:flavin adenine dinucleotide binding"/>
    <property type="evidence" value="ECO:0007669"/>
    <property type="project" value="InterPro"/>
</dbReference>
<dbReference type="GO" id="GO:0008115">
    <property type="term" value="F:sarcosine oxidase activity"/>
    <property type="evidence" value="ECO:0007669"/>
    <property type="project" value="UniProtKB-UniRule"/>
</dbReference>
<dbReference type="Gene3D" id="3.30.9.10">
    <property type="entry name" value="D-Amino Acid Oxidase, subunit A, domain 2"/>
    <property type="match status" value="1"/>
</dbReference>
<dbReference type="Gene3D" id="3.50.50.60">
    <property type="entry name" value="FAD/NAD(P)-binding domain"/>
    <property type="match status" value="1"/>
</dbReference>
<dbReference type="HAMAP" id="MF_00516">
    <property type="entry name" value="MSOX"/>
    <property type="match status" value="1"/>
</dbReference>
<dbReference type="InterPro" id="IPR006076">
    <property type="entry name" value="FAD-dep_OxRdtase"/>
</dbReference>
<dbReference type="InterPro" id="IPR036188">
    <property type="entry name" value="FAD/NAD-bd_sf"/>
</dbReference>
<dbReference type="InterPro" id="IPR045170">
    <property type="entry name" value="MTOX"/>
</dbReference>
<dbReference type="InterPro" id="IPR006281">
    <property type="entry name" value="SoxA_mon"/>
</dbReference>
<dbReference type="NCBIfam" id="NF008425">
    <property type="entry name" value="PRK11259.1"/>
    <property type="match status" value="1"/>
</dbReference>
<dbReference type="NCBIfam" id="TIGR01377">
    <property type="entry name" value="soxA_mon"/>
    <property type="match status" value="1"/>
</dbReference>
<dbReference type="PANTHER" id="PTHR10961:SF7">
    <property type="entry name" value="FAD DEPENDENT OXIDOREDUCTASE DOMAIN-CONTAINING PROTEIN"/>
    <property type="match status" value="1"/>
</dbReference>
<dbReference type="PANTHER" id="PTHR10961">
    <property type="entry name" value="PEROXISOMAL SARCOSINE OXIDASE"/>
    <property type="match status" value="1"/>
</dbReference>
<dbReference type="Pfam" id="PF01266">
    <property type="entry name" value="DAO"/>
    <property type="match status" value="1"/>
</dbReference>
<dbReference type="SUPFAM" id="SSF54373">
    <property type="entry name" value="FAD-linked reductases, C-terminal domain"/>
    <property type="match status" value="1"/>
</dbReference>
<dbReference type="SUPFAM" id="SSF51905">
    <property type="entry name" value="FAD/NAD(P)-binding domain"/>
    <property type="match status" value="1"/>
</dbReference>
<feature type="chain" id="PRO_0000213761" description="Monomeric sarcosine oxidase">
    <location>
        <begin position="1"/>
        <end position="387"/>
    </location>
</feature>
<feature type="binding site" evidence="2">
    <location>
        <begin position="6"/>
        <end position="36"/>
    </location>
    <ligand>
        <name>FAD</name>
        <dbReference type="ChEBI" id="CHEBI:57692"/>
    </ligand>
</feature>
<feature type="modified residue" description="S-8alpha-FAD cysteine">
    <location>
        <position position="316"/>
    </location>
</feature>
<feature type="strand" evidence="5">
    <location>
        <begin position="4"/>
        <end position="10"/>
    </location>
</feature>
<feature type="helix" evidence="5">
    <location>
        <begin position="14"/>
        <end position="24"/>
    </location>
</feature>
<feature type="turn" evidence="5">
    <location>
        <begin position="25"/>
        <end position="27"/>
    </location>
</feature>
<feature type="strand" evidence="5">
    <location>
        <begin position="30"/>
        <end position="33"/>
    </location>
</feature>
<feature type="strand" evidence="5">
    <location>
        <begin position="41"/>
        <end position="45"/>
    </location>
</feature>
<feature type="strand" evidence="5">
    <location>
        <begin position="47"/>
        <end position="52"/>
    </location>
</feature>
<feature type="helix" evidence="5">
    <location>
        <begin position="62"/>
        <end position="79"/>
    </location>
</feature>
<feature type="strand" evidence="5">
    <location>
        <begin position="90"/>
        <end position="95"/>
    </location>
</feature>
<feature type="helix" evidence="5">
    <location>
        <begin position="100"/>
        <end position="111"/>
    </location>
</feature>
<feature type="strand" evidence="5">
    <location>
        <begin position="117"/>
        <end position="120"/>
    </location>
</feature>
<feature type="helix" evidence="5">
    <location>
        <begin position="122"/>
        <end position="127"/>
    </location>
</feature>
<feature type="strand" evidence="5">
    <location>
        <begin position="137"/>
        <end position="142"/>
    </location>
</feature>
<feature type="strand" evidence="5">
    <location>
        <begin position="146"/>
        <end position="149"/>
    </location>
</feature>
<feature type="helix" evidence="5">
    <location>
        <begin position="150"/>
        <end position="163"/>
    </location>
</feature>
<feature type="strand" evidence="5">
    <location>
        <begin position="167"/>
        <end position="169"/>
    </location>
</feature>
<feature type="strand" evidence="5">
    <location>
        <begin position="174"/>
        <end position="179"/>
    </location>
</feature>
<feature type="strand" evidence="5">
    <location>
        <begin position="184"/>
        <end position="188"/>
    </location>
</feature>
<feature type="strand" evidence="5">
    <location>
        <begin position="191"/>
        <end position="200"/>
    </location>
</feature>
<feature type="helix" evidence="5">
    <location>
        <begin position="203"/>
        <end position="205"/>
    </location>
</feature>
<feature type="helix" evidence="5">
    <location>
        <begin position="206"/>
        <end position="209"/>
    </location>
</feature>
<feature type="helix" evidence="5">
    <location>
        <begin position="210"/>
        <end position="213"/>
    </location>
</feature>
<feature type="strand" evidence="5">
    <location>
        <begin position="220"/>
        <end position="229"/>
    </location>
</feature>
<feature type="helix" evidence="5">
    <location>
        <begin position="233"/>
        <end position="236"/>
    </location>
</feature>
<feature type="helix" evidence="5">
    <location>
        <begin position="238"/>
        <end position="240"/>
    </location>
</feature>
<feature type="strand" evidence="5">
    <location>
        <begin position="244"/>
        <end position="249"/>
    </location>
</feature>
<feature type="strand" evidence="5">
    <location>
        <begin position="252"/>
        <end position="257"/>
    </location>
</feature>
<feature type="strand" evidence="5">
    <location>
        <begin position="265"/>
        <end position="271"/>
    </location>
</feature>
<feature type="turn" evidence="5">
    <location>
        <begin position="278"/>
        <end position="280"/>
    </location>
</feature>
<feature type="helix" evidence="5">
    <location>
        <begin position="290"/>
        <end position="302"/>
    </location>
</feature>
<feature type="helix" evidence="5">
    <location>
        <begin position="304"/>
        <end position="306"/>
    </location>
</feature>
<feature type="strand" evidence="5">
    <location>
        <begin position="310"/>
        <end position="320"/>
    </location>
</feature>
<feature type="strand" evidence="5">
    <location>
        <begin position="327"/>
        <end position="330"/>
    </location>
</feature>
<feature type="strand" evidence="5">
    <location>
        <begin position="337"/>
        <end position="341"/>
    </location>
</feature>
<feature type="helix" evidence="5">
    <location>
        <begin position="348"/>
        <end position="350"/>
    </location>
</feature>
<feature type="helix" evidence="5">
    <location>
        <begin position="351"/>
        <end position="364"/>
    </location>
</feature>
<feature type="helix" evidence="5">
    <location>
        <begin position="372"/>
        <end position="374"/>
    </location>
</feature>
<feature type="helix" evidence="5">
    <location>
        <begin position="379"/>
        <end position="381"/>
    </location>
</feature>
<sequence length="387" mass="42873">MSTHFDVIVVGAGSMGMAAGYYLAKQGVKTLLVDSFDPPHTNGSHHGDTRIIRHAYGEGREYVPFALRAQELWYELEKETHHKIFTQTGVLVYGPKGGSAFVSETMEAANIHSLEHELFEGKQLTDRWAGVEVPDNYEAIFEPNSGVLFSENCIQAYRELAEAHGATVLTYTPVEDFEVTEDLVTIKTAKGSYTANKLVVSMGAWNSKLLSKLDVEIPLQPYRQVVGFFECDEAKYSNNAHYPAFMVEVENGIYYGFPSFGGSGLKIGYHSYGQQIDPDTINREFGAYPEDEANLRKFLEQYMPGANGELKKGAVCMYTKTPDEHFVIDLHPKYSNVAIAAGFSGHGFKFSSVVGETLAQLATTGKTEHDISIFSLNRDALKKEAVK</sequence>
<name>MSOX_BACSN</name>